<name>BIOF_ANAD2</name>
<comment type="function">
    <text evidence="1">Catalyzes the decarboxylative condensation of pimeloyl-[acyl-carrier protein] and L-alanine to produce 8-amino-7-oxononanoate (AON), [acyl-carrier protein], and carbon dioxide.</text>
</comment>
<comment type="catalytic activity">
    <reaction evidence="1">
        <text>6-carboxyhexanoyl-[ACP] + L-alanine + H(+) = (8S)-8-amino-7-oxononanoate + holo-[ACP] + CO2</text>
        <dbReference type="Rhea" id="RHEA:42288"/>
        <dbReference type="Rhea" id="RHEA-COMP:9685"/>
        <dbReference type="Rhea" id="RHEA-COMP:9955"/>
        <dbReference type="ChEBI" id="CHEBI:15378"/>
        <dbReference type="ChEBI" id="CHEBI:16526"/>
        <dbReference type="ChEBI" id="CHEBI:57972"/>
        <dbReference type="ChEBI" id="CHEBI:64479"/>
        <dbReference type="ChEBI" id="CHEBI:78846"/>
        <dbReference type="ChEBI" id="CHEBI:149468"/>
        <dbReference type="EC" id="2.3.1.47"/>
    </reaction>
</comment>
<comment type="cofactor">
    <cofactor evidence="1">
        <name>pyridoxal 5'-phosphate</name>
        <dbReference type="ChEBI" id="CHEBI:597326"/>
    </cofactor>
</comment>
<comment type="pathway">
    <text evidence="1">Cofactor biosynthesis; biotin biosynthesis.</text>
</comment>
<comment type="subunit">
    <text evidence="1">Homodimer.</text>
</comment>
<comment type="similarity">
    <text evidence="1">Belongs to the class-II pyridoxal-phosphate-dependent aminotransferase family. BioF subfamily.</text>
</comment>
<proteinExistence type="inferred from homology"/>
<reference key="1">
    <citation type="submission" date="2009-01" db="EMBL/GenBank/DDBJ databases">
        <title>Complete sequence of Anaeromyxobacter dehalogenans 2CP-1.</title>
        <authorList>
            <person name="Lucas S."/>
            <person name="Copeland A."/>
            <person name="Lapidus A."/>
            <person name="Glavina del Rio T."/>
            <person name="Dalin E."/>
            <person name="Tice H."/>
            <person name="Bruce D."/>
            <person name="Goodwin L."/>
            <person name="Pitluck S."/>
            <person name="Saunders E."/>
            <person name="Brettin T."/>
            <person name="Detter J.C."/>
            <person name="Han C."/>
            <person name="Larimer F."/>
            <person name="Land M."/>
            <person name="Hauser L."/>
            <person name="Kyrpides N."/>
            <person name="Ovchinnikova G."/>
            <person name="Beliaev A.S."/>
            <person name="Richardson P."/>
        </authorList>
    </citation>
    <scope>NUCLEOTIDE SEQUENCE [LARGE SCALE GENOMIC DNA]</scope>
    <source>
        <strain>2CP-1 / ATCC BAA-258</strain>
    </source>
</reference>
<accession>B8J637</accession>
<sequence length="398" mass="41256">MARGALDWIGAELEALDAKGLRRSLEPIGPAQGPVVQVGGRALVNLCSNDYLGLAADPRVRAAAADAAMRFGAGSGAARLVAGDLPPHGALEARLAAWKGREAALLFGSGYHANAGVPGALVGRDDAVFSDVLNHASIVDGCLLSRAELVRYRHCDVEELAGLLARTRARRKLVVTDAIFSMDGDAAPLRELAELCDRHGAMLYVDEAHAAGVLGPNGAGLAEALGVQDRVDVHMGTLGKALGAFGAYVAGERRLIELLVSRARPFVFSTALPPPACAAALAALEVVATEPSRRTHLFALCARMQAGLARLGFDVARVASPIFPVVLGTEARALAAAAALRERGWFVRAIRPPTVPHGTSRLRVALSAAHDAAQVDGFLAALAAVLPDLPPAGPRRAG</sequence>
<gene>
    <name evidence="1" type="primary">bioF</name>
    <name type="ordered locus">A2cp1_3602</name>
</gene>
<dbReference type="EC" id="2.3.1.47" evidence="1"/>
<dbReference type="EMBL" id="CP001359">
    <property type="protein sequence ID" value="ACL66932.1"/>
    <property type="molecule type" value="Genomic_DNA"/>
</dbReference>
<dbReference type="RefSeq" id="WP_015934711.1">
    <property type="nucleotide sequence ID" value="NC_011891.1"/>
</dbReference>
<dbReference type="SMR" id="B8J637"/>
<dbReference type="KEGG" id="acp:A2cp1_3602"/>
<dbReference type="HOGENOM" id="CLU_015846_11_0_7"/>
<dbReference type="UniPathway" id="UPA00078"/>
<dbReference type="Proteomes" id="UP000007089">
    <property type="component" value="Chromosome"/>
</dbReference>
<dbReference type="GO" id="GO:0008710">
    <property type="term" value="F:8-amino-7-oxononanoate synthase activity"/>
    <property type="evidence" value="ECO:0007669"/>
    <property type="project" value="UniProtKB-EC"/>
</dbReference>
<dbReference type="GO" id="GO:0030170">
    <property type="term" value="F:pyridoxal phosphate binding"/>
    <property type="evidence" value="ECO:0007669"/>
    <property type="project" value="InterPro"/>
</dbReference>
<dbReference type="GO" id="GO:0009102">
    <property type="term" value="P:biotin biosynthetic process"/>
    <property type="evidence" value="ECO:0007669"/>
    <property type="project" value="UniProtKB-UniPathway"/>
</dbReference>
<dbReference type="CDD" id="cd06454">
    <property type="entry name" value="KBL_like"/>
    <property type="match status" value="1"/>
</dbReference>
<dbReference type="Gene3D" id="3.90.1150.10">
    <property type="entry name" value="Aspartate Aminotransferase, domain 1"/>
    <property type="match status" value="1"/>
</dbReference>
<dbReference type="Gene3D" id="3.40.640.10">
    <property type="entry name" value="Type I PLP-dependent aspartate aminotransferase-like (Major domain)"/>
    <property type="match status" value="1"/>
</dbReference>
<dbReference type="HAMAP" id="MF_01693">
    <property type="entry name" value="BioF_aminotrans_2"/>
    <property type="match status" value="1"/>
</dbReference>
<dbReference type="InterPro" id="IPR001917">
    <property type="entry name" value="Aminotrans_II_pyridoxalP_BS"/>
</dbReference>
<dbReference type="InterPro" id="IPR004839">
    <property type="entry name" value="Aminotransferase_I/II_large"/>
</dbReference>
<dbReference type="InterPro" id="IPR050087">
    <property type="entry name" value="AON_synthase_class-II"/>
</dbReference>
<dbReference type="InterPro" id="IPR004723">
    <property type="entry name" value="AONS_Archaea/Proteobacteria"/>
</dbReference>
<dbReference type="InterPro" id="IPR022834">
    <property type="entry name" value="AONS_Proteobacteria"/>
</dbReference>
<dbReference type="InterPro" id="IPR015424">
    <property type="entry name" value="PyrdxlP-dep_Trfase"/>
</dbReference>
<dbReference type="InterPro" id="IPR015421">
    <property type="entry name" value="PyrdxlP-dep_Trfase_major"/>
</dbReference>
<dbReference type="InterPro" id="IPR015422">
    <property type="entry name" value="PyrdxlP-dep_Trfase_small"/>
</dbReference>
<dbReference type="NCBIfam" id="TIGR00858">
    <property type="entry name" value="bioF"/>
    <property type="match status" value="1"/>
</dbReference>
<dbReference type="PANTHER" id="PTHR13693:SF100">
    <property type="entry name" value="8-AMINO-7-OXONONANOATE SYNTHASE"/>
    <property type="match status" value="1"/>
</dbReference>
<dbReference type="PANTHER" id="PTHR13693">
    <property type="entry name" value="CLASS II AMINOTRANSFERASE/8-AMINO-7-OXONONANOATE SYNTHASE"/>
    <property type="match status" value="1"/>
</dbReference>
<dbReference type="Pfam" id="PF00155">
    <property type="entry name" value="Aminotran_1_2"/>
    <property type="match status" value="1"/>
</dbReference>
<dbReference type="SUPFAM" id="SSF53383">
    <property type="entry name" value="PLP-dependent transferases"/>
    <property type="match status" value="1"/>
</dbReference>
<dbReference type="PROSITE" id="PS00599">
    <property type="entry name" value="AA_TRANSFER_CLASS_2"/>
    <property type="match status" value="1"/>
</dbReference>
<keyword id="KW-0093">Biotin biosynthesis</keyword>
<keyword id="KW-0663">Pyridoxal phosphate</keyword>
<keyword id="KW-0808">Transferase</keyword>
<feature type="chain" id="PRO_0000380894" description="8-amino-7-oxononanoate synthase">
    <location>
        <begin position="1"/>
        <end position="398"/>
    </location>
</feature>
<feature type="binding site" evidence="1">
    <location>
        <position position="23"/>
    </location>
    <ligand>
        <name>substrate</name>
    </ligand>
</feature>
<feature type="binding site" evidence="1">
    <location>
        <begin position="110"/>
        <end position="111"/>
    </location>
    <ligand>
        <name>pyridoxal 5'-phosphate</name>
        <dbReference type="ChEBI" id="CHEBI:597326"/>
    </ligand>
</feature>
<feature type="binding site" evidence="1">
    <location>
        <position position="135"/>
    </location>
    <ligand>
        <name>substrate</name>
    </ligand>
</feature>
<feature type="binding site" evidence="1">
    <location>
        <position position="181"/>
    </location>
    <ligand>
        <name>pyridoxal 5'-phosphate</name>
        <dbReference type="ChEBI" id="CHEBI:597326"/>
    </ligand>
</feature>
<feature type="binding site" evidence="1">
    <location>
        <position position="209"/>
    </location>
    <ligand>
        <name>pyridoxal 5'-phosphate</name>
        <dbReference type="ChEBI" id="CHEBI:597326"/>
    </ligand>
</feature>
<feature type="binding site" evidence="1">
    <location>
        <position position="237"/>
    </location>
    <ligand>
        <name>pyridoxal 5'-phosphate</name>
        <dbReference type="ChEBI" id="CHEBI:597326"/>
    </ligand>
</feature>
<feature type="binding site" evidence="1">
    <location>
        <position position="354"/>
    </location>
    <ligand>
        <name>substrate</name>
    </ligand>
</feature>
<feature type="modified residue" description="N6-(pyridoxal phosphate)lysine" evidence="1">
    <location>
        <position position="240"/>
    </location>
</feature>
<evidence type="ECO:0000255" key="1">
    <source>
        <dbReference type="HAMAP-Rule" id="MF_01693"/>
    </source>
</evidence>
<organism>
    <name type="scientific">Anaeromyxobacter dehalogenans (strain 2CP-1 / ATCC BAA-258)</name>
    <dbReference type="NCBI Taxonomy" id="455488"/>
    <lineage>
        <taxon>Bacteria</taxon>
        <taxon>Pseudomonadati</taxon>
        <taxon>Myxococcota</taxon>
        <taxon>Myxococcia</taxon>
        <taxon>Myxococcales</taxon>
        <taxon>Cystobacterineae</taxon>
        <taxon>Anaeromyxobacteraceae</taxon>
        <taxon>Anaeromyxobacter</taxon>
    </lineage>
</organism>
<protein>
    <recommendedName>
        <fullName evidence="1">8-amino-7-oxononanoate synthase</fullName>
        <shortName evidence="1">AONS</shortName>
        <ecNumber evidence="1">2.3.1.47</ecNumber>
    </recommendedName>
    <alternativeName>
        <fullName evidence="1">7-keto-8-amino-pelargonic acid synthase</fullName>
        <shortName evidence="1">7-KAP synthase</shortName>
        <shortName evidence="1">KAPA synthase</shortName>
    </alternativeName>
    <alternativeName>
        <fullName evidence="1">8-amino-7-ketopelargonate synthase</fullName>
    </alternativeName>
</protein>